<name>NDK_THET2</name>
<reference key="1">
    <citation type="journal article" date="2004" name="Nat. Biotechnol.">
        <title>The genome sequence of the extreme thermophile Thermus thermophilus.</title>
        <authorList>
            <person name="Henne A."/>
            <person name="Brueggemann H."/>
            <person name="Raasch C."/>
            <person name="Wiezer A."/>
            <person name="Hartsch T."/>
            <person name="Liesegang H."/>
            <person name="Johann A."/>
            <person name="Lienard T."/>
            <person name="Gohl O."/>
            <person name="Martinez-Arias R."/>
            <person name="Jacobi C."/>
            <person name="Starkuviene V."/>
            <person name="Schlenczeck S."/>
            <person name="Dencker S."/>
            <person name="Huber R."/>
            <person name="Klenk H.-P."/>
            <person name="Kramer W."/>
            <person name="Merkl R."/>
            <person name="Gottschalk G."/>
            <person name="Fritz H.-J."/>
        </authorList>
    </citation>
    <scope>NUCLEOTIDE SEQUENCE [LARGE SCALE GENOMIC DNA]</scope>
    <source>
        <strain>ATCC BAA-163 / DSM 7039 / HB27</strain>
    </source>
</reference>
<organism>
    <name type="scientific">Thermus thermophilus (strain ATCC BAA-163 / DSM 7039 / HB27)</name>
    <dbReference type="NCBI Taxonomy" id="262724"/>
    <lineage>
        <taxon>Bacteria</taxon>
        <taxon>Thermotogati</taxon>
        <taxon>Deinococcota</taxon>
        <taxon>Deinococci</taxon>
        <taxon>Thermales</taxon>
        <taxon>Thermaceae</taxon>
        <taxon>Thermus</taxon>
    </lineage>
</organism>
<proteinExistence type="inferred from homology"/>
<protein>
    <recommendedName>
        <fullName evidence="1">Nucleoside diphosphate kinase</fullName>
        <shortName evidence="1">NDK</shortName>
        <shortName evidence="1">NDP kinase</shortName>
        <ecNumber evidence="1">2.7.4.6</ecNumber>
    </recommendedName>
    <alternativeName>
        <fullName evidence="1">Nucleoside-2-P kinase</fullName>
    </alternativeName>
</protein>
<keyword id="KW-0067">ATP-binding</keyword>
<keyword id="KW-0963">Cytoplasm</keyword>
<keyword id="KW-0418">Kinase</keyword>
<keyword id="KW-0460">Magnesium</keyword>
<keyword id="KW-0479">Metal-binding</keyword>
<keyword id="KW-0546">Nucleotide metabolism</keyword>
<keyword id="KW-0547">Nucleotide-binding</keyword>
<keyword id="KW-0597">Phosphoprotein</keyword>
<keyword id="KW-0808">Transferase</keyword>
<gene>
    <name evidence="1" type="primary">ndk</name>
    <name type="ordered locus">TT_C1798</name>
</gene>
<comment type="function">
    <text evidence="1">Major role in the synthesis of nucleoside triphosphates other than ATP. The ATP gamma phosphate is transferred to the NDP beta phosphate via a ping-pong mechanism, using a phosphorylated active-site intermediate.</text>
</comment>
<comment type="catalytic activity">
    <reaction evidence="1">
        <text>a 2'-deoxyribonucleoside 5'-diphosphate + ATP = a 2'-deoxyribonucleoside 5'-triphosphate + ADP</text>
        <dbReference type="Rhea" id="RHEA:44640"/>
        <dbReference type="ChEBI" id="CHEBI:30616"/>
        <dbReference type="ChEBI" id="CHEBI:61560"/>
        <dbReference type="ChEBI" id="CHEBI:73316"/>
        <dbReference type="ChEBI" id="CHEBI:456216"/>
        <dbReference type="EC" id="2.7.4.6"/>
    </reaction>
</comment>
<comment type="catalytic activity">
    <reaction evidence="1">
        <text>a ribonucleoside 5'-diphosphate + ATP = a ribonucleoside 5'-triphosphate + ADP</text>
        <dbReference type="Rhea" id="RHEA:18113"/>
        <dbReference type="ChEBI" id="CHEBI:30616"/>
        <dbReference type="ChEBI" id="CHEBI:57930"/>
        <dbReference type="ChEBI" id="CHEBI:61557"/>
        <dbReference type="ChEBI" id="CHEBI:456216"/>
        <dbReference type="EC" id="2.7.4.6"/>
    </reaction>
</comment>
<comment type="cofactor">
    <cofactor evidence="1">
        <name>Mg(2+)</name>
        <dbReference type="ChEBI" id="CHEBI:18420"/>
    </cofactor>
</comment>
<comment type="subunit">
    <text evidence="1">Homotetramer.</text>
</comment>
<comment type="subcellular location">
    <subcellularLocation>
        <location evidence="1">Cytoplasm</location>
    </subcellularLocation>
</comment>
<comment type="similarity">
    <text evidence="1">Belongs to the NDK family.</text>
</comment>
<accession>Q72GQ0</accession>
<dbReference type="EC" id="2.7.4.6" evidence="1"/>
<dbReference type="EMBL" id="AE017221">
    <property type="protein sequence ID" value="AAS82140.1"/>
    <property type="molecule type" value="Genomic_DNA"/>
</dbReference>
<dbReference type="RefSeq" id="WP_011174154.1">
    <property type="nucleotide sequence ID" value="NC_005835.1"/>
</dbReference>
<dbReference type="SMR" id="Q72GQ0"/>
<dbReference type="KEGG" id="tth:TT_C1798"/>
<dbReference type="eggNOG" id="COG0105">
    <property type="taxonomic scope" value="Bacteria"/>
</dbReference>
<dbReference type="HOGENOM" id="CLU_060216_6_3_0"/>
<dbReference type="OrthoDB" id="9801161at2"/>
<dbReference type="Proteomes" id="UP000000592">
    <property type="component" value="Chromosome"/>
</dbReference>
<dbReference type="GO" id="GO:0005737">
    <property type="term" value="C:cytoplasm"/>
    <property type="evidence" value="ECO:0007669"/>
    <property type="project" value="UniProtKB-SubCell"/>
</dbReference>
<dbReference type="GO" id="GO:0005524">
    <property type="term" value="F:ATP binding"/>
    <property type="evidence" value="ECO:0007669"/>
    <property type="project" value="UniProtKB-UniRule"/>
</dbReference>
<dbReference type="GO" id="GO:0046872">
    <property type="term" value="F:metal ion binding"/>
    <property type="evidence" value="ECO:0007669"/>
    <property type="project" value="UniProtKB-KW"/>
</dbReference>
<dbReference type="GO" id="GO:0004550">
    <property type="term" value="F:nucleoside diphosphate kinase activity"/>
    <property type="evidence" value="ECO:0007669"/>
    <property type="project" value="UniProtKB-UniRule"/>
</dbReference>
<dbReference type="GO" id="GO:0006241">
    <property type="term" value="P:CTP biosynthetic process"/>
    <property type="evidence" value="ECO:0007669"/>
    <property type="project" value="UniProtKB-UniRule"/>
</dbReference>
<dbReference type="GO" id="GO:0006183">
    <property type="term" value="P:GTP biosynthetic process"/>
    <property type="evidence" value="ECO:0007669"/>
    <property type="project" value="UniProtKB-UniRule"/>
</dbReference>
<dbReference type="GO" id="GO:0006228">
    <property type="term" value="P:UTP biosynthetic process"/>
    <property type="evidence" value="ECO:0007669"/>
    <property type="project" value="UniProtKB-UniRule"/>
</dbReference>
<dbReference type="CDD" id="cd04413">
    <property type="entry name" value="NDPk_I"/>
    <property type="match status" value="1"/>
</dbReference>
<dbReference type="FunFam" id="3.30.70.141:FF:000003">
    <property type="entry name" value="Nucleoside diphosphate kinase"/>
    <property type="match status" value="1"/>
</dbReference>
<dbReference type="Gene3D" id="3.30.70.141">
    <property type="entry name" value="Nucleoside diphosphate kinase-like domain"/>
    <property type="match status" value="1"/>
</dbReference>
<dbReference type="HAMAP" id="MF_00451">
    <property type="entry name" value="NDP_kinase"/>
    <property type="match status" value="1"/>
</dbReference>
<dbReference type="InterPro" id="IPR034907">
    <property type="entry name" value="NDK-like_dom"/>
</dbReference>
<dbReference type="InterPro" id="IPR036850">
    <property type="entry name" value="NDK-like_dom_sf"/>
</dbReference>
<dbReference type="InterPro" id="IPR001564">
    <property type="entry name" value="Nucleoside_diP_kinase"/>
</dbReference>
<dbReference type="NCBIfam" id="NF001908">
    <property type="entry name" value="PRK00668.1"/>
    <property type="match status" value="1"/>
</dbReference>
<dbReference type="PANTHER" id="PTHR11349">
    <property type="entry name" value="NUCLEOSIDE DIPHOSPHATE KINASE"/>
    <property type="match status" value="1"/>
</dbReference>
<dbReference type="Pfam" id="PF00334">
    <property type="entry name" value="NDK"/>
    <property type="match status" value="1"/>
</dbReference>
<dbReference type="PRINTS" id="PR01243">
    <property type="entry name" value="NUCDPKINASE"/>
</dbReference>
<dbReference type="SMART" id="SM00562">
    <property type="entry name" value="NDK"/>
    <property type="match status" value="1"/>
</dbReference>
<dbReference type="SUPFAM" id="SSF54919">
    <property type="entry name" value="Nucleoside diphosphate kinase, NDK"/>
    <property type="match status" value="1"/>
</dbReference>
<dbReference type="PROSITE" id="PS51374">
    <property type="entry name" value="NDPK_LIKE"/>
    <property type="match status" value="1"/>
</dbReference>
<evidence type="ECO:0000255" key="1">
    <source>
        <dbReference type="HAMAP-Rule" id="MF_00451"/>
    </source>
</evidence>
<sequence>MERTFVMIKPDGVRRGLVGEILARFERKGFRIAALKLMRISQELAERHYAEHREKPFFPGLVRFITSGPVVAMVLEGPGVVAEVRKMMGATHPKDALPGTIRGDFATTIDENVIHGSATLEDAQREIALFFRPEELL</sequence>
<feature type="chain" id="PRO_0000137066" description="Nucleoside diphosphate kinase">
    <location>
        <begin position="1"/>
        <end position="137"/>
    </location>
</feature>
<feature type="active site" description="Pros-phosphohistidine intermediate" evidence="1">
    <location>
        <position position="115"/>
    </location>
</feature>
<feature type="binding site" evidence="1">
    <location>
        <position position="9"/>
    </location>
    <ligand>
        <name>ATP</name>
        <dbReference type="ChEBI" id="CHEBI:30616"/>
    </ligand>
</feature>
<feature type="binding site" evidence="1">
    <location>
        <position position="57"/>
    </location>
    <ligand>
        <name>ATP</name>
        <dbReference type="ChEBI" id="CHEBI:30616"/>
    </ligand>
</feature>
<feature type="binding site" evidence="1">
    <location>
        <position position="85"/>
    </location>
    <ligand>
        <name>ATP</name>
        <dbReference type="ChEBI" id="CHEBI:30616"/>
    </ligand>
</feature>
<feature type="binding site" evidence="1">
    <location>
        <position position="91"/>
    </location>
    <ligand>
        <name>ATP</name>
        <dbReference type="ChEBI" id="CHEBI:30616"/>
    </ligand>
</feature>
<feature type="binding site" evidence="1">
    <location>
        <position position="102"/>
    </location>
    <ligand>
        <name>ATP</name>
        <dbReference type="ChEBI" id="CHEBI:30616"/>
    </ligand>
</feature>
<feature type="binding site" evidence="1">
    <location>
        <position position="112"/>
    </location>
    <ligand>
        <name>ATP</name>
        <dbReference type="ChEBI" id="CHEBI:30616"/>
    </ligand>
</feature>